<comment type="similarity">
    <text evidence="1">Belongs to the orthopoxvirus OPG159 protein family.</text>
</comment>
<organismHost>
    <name type="scientific">Homo sapiens</name>
    <name type="common">Human</name>
    <dbReference type="NCBI Taxonomy" id="9606"/>
</organismHost>
<feature type="chain" id="PRO_0000099309" description="Protein OPG159">
    <location>
        <begin position="1"/>
        <end position="124"/>
    </location>
</feature>
<reference key="1">
    <citation type="journal article" date="1990" name="Virology">
        <title>The complete DNA sequence of vaccinia virus.</title>
        <authorList>
            <person name="Goebel S.J."/>
            <person name="Johnson G.P."/>
            <person name="Perkus M.E."/>
            <person name="Davis S.W."/>
            <person name="Winslow J.P."/>
            <person name="Paoletti E."/>
        </authorList>
    </citation>
    <scope>NUCLEOTIDE SEQUENCE [LARGE SCALE GENOMIC DNA]</scope>
</reference>
<reference key="2">
    <citation type="journal article" date="1990" name="Virology">
        <title>Appendix to 'The complete DNA sequence of vaccinia virus'.</title>
        <authorList>
            <person name="Goebel S.J."/>
            <person name="Johnson G.P."/>
            <person name="Perkus M.E."/>
            <person name="Davis S.W."/>
            <person name="Winslow J.P."/>
            <person name="Paoletti E."/>
        </authorList>
    </citation>
    <scope>NUCLEOTIDE SEQUENCE [LARGE SCALE GENOMIC DNA]</scope>
</reference>
<keyword id="KW-1185">Reference proteome</keyword>
<proteinExistence type="inferred from homology"/>
<gene>
    <name type="primary">OPG159</name>
    <name type="ORF">A31R</name>
</gene>
<protein>
    <recommendedName>
        <fullName>Protein OPG159</fullName>
    </recommendedName>
</protein>
<accession>P21096</accession>
<sequence>MASILNTLRFLEKTSFYNCNDSITKEKIKIKHKGMSFVFYKPKHSTVVKYLSGGGIYHDDLVVLGKVTINDLKMMLFYMDLSYHGVTSSGVIYKLGSSIDRLSLNRTIVTKVNNYDDTFFDDDD</sequence>
<dbReference type="EMBL" id="M35027">
    <property type="protein sequence ID" value="AAA48157.1"/>
    <property type="molecule type" value="Genomic_DNA"/>
</dbReference>
<dbReference type="PIR" id="F42520">
    <property type="entry name" value="F42520"/>
</dbReference>
<dbReference type="Proteomes" id="UP000008269">
    <property type="component" value="Segment"/>
</dbReference>
<dbReference type="InterPro" id="IPR008786">
    <property type="entry name" value="Poxvirus_A31"/>
</dbReference>
<dbReference type="Pfam" id="PF05771">
    <property type="entry name" value="Pox_A31"/>
    <property type="match status" value="1"/>
</dbReference>
<name>PG159_VACCC</name>
<organism>
    <name type="scientific">Vaccinia virus (strain Copenhagen)</name>
    <name type="common">VACV</name>
    <dbReference type="NCBI Taxonomy" id="10249"/>
    <lineage>
        <taxon>Viruses</taxon>
        <taxon>Varidnaviria</taxon>
        <taxon>Bamfordvirae</taxon>
        <taxon>Nucleocytoviricota</taxon>
        <taxon>Pokkesviricetes</taxon>
        <taxon>Chitovirales</taxon>
        <taxon>Poxviridae</taxon>
        <taxon>Chordopoxvirinae</taxon>
        <taxon>Orthopoxvirus</taxon>
        <taxon>Vaccinia virus</taxon>
    </lineage>
</organism>
<evidence type="ECO:0000305" key="1"/>